<keyword id="KW-0010">Activator</keyword>
<keyword id="KW-0963">Cytoplasm</keyword>
<keyword id="KW-0496">Mitochondrion</keyword>
<keyword id="KW-0539">Nucleus</keyword>
<keyword id="KW-1185">Reference proteome</keyword>
<keyword id="KW-0804">Transcription</keyword>
<keyword id="KW-0805">Transcription regulation</keyword>
<sequence>MKDLNPEMGKFATTKGPPQDNRGMVDIATLPNFPANRSGTPREEMYLAPNKMETPRILNMNMVPDYLQKENFSPDFSSATVSAKSSPVNVTHDESLPLGTIESNSTKDSKYAVQRQQQQVVDFIENNMQLLSSETLNFRSDIMKTLELPIPKRRDIKGNHLSKLLFAKSPLTINTYCQFYDRRTKRICNQEMIWKDKNSREKHGSRKYQRHLSKVHDVQLTPNNFTEFFDHNSPLFQECYDYQSRLMRDLLVEPDAKFKEKKKKKKGDVNGNHPETGSSLINHQVQQQNVRELQSKIAMNDLIEILIDLNIPFSVLDYQPMRNWLIKYSIISTDTLPDEVYFKTDPGVNELEHNSSNLNNSNSGTPHNHNQNQHTN</sequence>
<protein>
    <recommendedName>
        <fullName>Respiration factor 1</fullName>
    </recommendedName>
</protein>
<proteinExistence type="evidence at protein level"/>
<feature type="chain" id="PRO_0000203272" description="Respiration factor 1">
    <location>
        <begin position="1"/>
        <end position="376"/>
    </location>
</feature>
<feature type="region of interest" description="Disordered" evidence="1">
    <location>
        <begin position="1"/>
        <end position="23"/>
    </location>
</feature>
<feature type="region of interest" description="Disordered" evidence="1">
    <location>
        <begin position="88"/>
        <end position="107"/>
    </location>
</feature>
<feature type="region of interest" description="Disordered" evidence="1">
    <location>
        <begin position="258"/>
        <end position="279"/>
    </location>
</feature>
<feature type="region of interest" description="Disordered" evidence="1">
    <location>
        <begin position="347"/>
        <end position="376"/>
    </location>
</feature>
<feature type="compositionally biased region" description="Low complexity" evidence="1">
    <location>
        <begin position="354"/>
        <end position="376"/>
    </location>
</feature>
<name>RSF1_YEAST</name>
<gene>
    <name type="primary">RSF1</name>
    <name type="ordered locus">YMR030W</name>
    <name type="ORF">YM9973.03</name>
</gene>
<evidence type="ECO:0000256" key="1">
    <source>
        <dbReference type="SAM" id="MobiDB-lite"/>
    </source>
</evidence>
<evidence type="ECO:0000269" key="2">
    <source>
    </source>
</evidence>
<evidence type="ECO:0000269" key="3">
    <source>
    </source>
</evidence>
<evidence type="ECO:0000269" key="4">
    <source>
    </source>
</evidence>
<dbReference type="EMBL" id="Z49213">
    <property type="protein sequence ID" value="CAA89145.1"/>
    <property type="molecule type" value="Genomic_DNA"/>
</dbReference>
<dbReference type="EMBL" id="AY557995">
    <property type="protein sequence ID" value="AAS56321.1"/>
    <property type="molecule type" value="Genomic_DNA"/>
</dbReference>
<dbReference type="EMBL" id="BK006946">
    <property type="protein sequence ID" value="DAA09928.1"/>
    <property type="molecule type" value="Genomic_DNA"/>
</dbReference>
<dbReference type="PIR" id="S53946">
    <property type="entry name" value="S53946"/>
</dbReference>
<dbReference type="RefSeq" id="NP_013743.1">
    <property type="nucleotide sequence ID" value="NM_001182526.1"/>
</dbReference>
<dbReference type="SMR" id="Q05043"/>
<dbReference type="BioGRID" id="35202">
    <property type="interactions" value="154"/>
</dbReference>
<dbReference type="DIP" id="DIP-4817N"/>
<dbReference type="FunCoup" id="Q05043">
    <property type="interactions" value="53"/>
</dbReference>
<dbReference type="STRING" id="4932.YMR030W"/>
<dbReference type="iPTMnet" id="Q05043"/>
<dbReference type="PaxDb" id="4932-YMR030W"/>
<dbReference type="PeptideAtlas" id="Q05043"/>
<dbReference type="EnsemblFungi" id="YMR030W_mRNA">
    <property type="protein sequence ID" value="YMR030W"/>
    <property type="gene ID" value="YMR030W"/>
</dbReference>
<dbReference type="GeneID" id="855045"/>
<dbReference type="KEGG" id="sce:YMR030W"/>
<dbReference type="AGR" id="SGD:S000004632"/>
<dbReference type="SGD" id="S000004632">
    <property type="gene designation" value="RSF1"/>
</dbReference>
<dbReference type="VEuPathDB" id="FungiDB:YMR030W"/>
<dbReference type="HOGENOM" id="CLU_736105_0_0_1"/>
<dbReference type="InParanoid" id="Q05043"/>
<dbReference type="OMA" id="RRTKRIC"/>
<dbReference type="OrthoDB" id="4059548at2759"/>
<dbReference type="BioCyc" id="YEAST:G3O-32735-MONOMER"/>
<dbReference type="BioGRID-ORCS" id="855045">
    <property type="hits" value="0 hits in 10 CRISPR screens"/>
</dbReference>
<dbReference type="PRO" id="PR:Q05043"/>
<dbReference type="Proteomes" id="UP000002311">
    <property type="component" value="Chromosome XIII"/>
</dbReference>
<dbReference type="RNAct" id="Q05043">
    <property type="molecule type" value="protein"/>
</dbReference>
<dbReference type="GO" id="GO:0005739">
    <property type="term" value="C:mitochondrion"/>
    <property type="evidence" value="ECO:0000314"/>
    <property type="project" value="SGD"/>
</dbReference>
<dbReference type="GO" id="GO:0005634">
    <property type="term" value="C:nucleus"/>
    <property type="evidence" value="ECO:0000314"/>
    <property type="project" value="SGD"/>
</dbReference>
<dbReference type="GO" id="GO:0009060">
    <property type="term" value="P:aerobic respiration"/>
    <property type="evidence" value="ECO:0000315"/>
    <property type="project" value="SGD"/>
</dbReference>
<dbReference type="GO" id="GO:0006390">
    <property type="term" value="P:mitochondrial transcription"/>
    <property type="evidence" value="ECO:0000315"/>
    <property type="project" value="SGD"/>
</dbReference>
<dbReference type="GO" id="GO:0006366">
    <property type="term" value="P:transcription by RNA polymerase II"/>
    <property type="evidence" value="ECO:0000315"/>
    <property type="project" value="SGD"/>
</dbReference>
<dbReference type="InterPro" id="IPR027998">
    <property type="entry name" value="Rsf1_fungi"/>
</dbReference>
<dbReference type="Pfam" id="PF14876">
    <property type="entry name" value="RSF"/>
    <property type="match status" value="1"/>
</dbReference>
<accession>Q05043</accession>
<accession>D6VZK4</accession>
<comment type="function">
    <text evidence="2 3 4">Mitochondrial and nuclear transcriptional activator required for respiratory growth.</text>
</comment>
<comment type="subcellular location">
    <subcellularLocation>
        <location>Cytoplasm</location>
    </subcellularLocation>
    <subcellularLocation>
        <location>Nucleus</location>
    </subcellularLocation>
    <subcellularLocation>
        <location>Mitochondrion</location>
    </subcellularLocation>
</comment>
<comment type="induction">
    <text evidence="2">During respiratory growth.</text>
</comment>
<organism>
    <name type="scientific">Saccharomyces cerevisiae (strain ATCC 204508 / S288c)</name>
    <name type="common">Baker's yeast</name>
    <dbReference type="NCBI Taxonomy" id="559292"/>
    <lineage>
        <taxon>Eukaryota</taxon>
        <taxon>Fungi</taxon>
        <taxon>Dikarya</taxon>
        <taxon>Ascomycota</taxon>
        <taxon>Saccharomycotina</taxon>
        <taxon>Saccharomycetes</taxon>
        <taxon>Saccharomycetales</taxon>
        <taxon>Saccharomycetaceae</taxon>
        <taxon>Saccharomyces</taxon>
    </lineage>
</organism>
<reference key="1">
    <citation type="journal article" date="1997" name="Nature">
        <title>The nucleotide sequence of Saccharomyces cerevisiae chromosome XIII.</title>
        <authorList>
            <person name="Bowman S."/>
            <person name="Churcher C.M."/>
            <person name="Badcock K."/>
            <person name="Brown D."/>
            <person name="Chillingworth T."/>
            <person name="Connor R."/>
            <person name="Dedman K."/>
            <person name="Devlin K."/>
            <person name="Gentles S."/>
            <person name="Hamlin N."/>
            <person name="Hunt S."/>
            <person name="Jagels K."/>
            <person name="Lye G."/>
            <person name="Moule S."/>
            <person name="Odell C."/>
            <person name="Pearson D."/>
            <person name="Rajandream M.A."/>
            <person name="Rice P."/>
            <person name="Skelton J."/>
            <person name="Walsh S.V."/>
            <person name="Whitehead S."/>
            <person name="Barrell B.G."/>
        </authorList>
    </citation>
    <scope>NUCLEOTIDE SEQUENCE [LARGE SCALE GENOMIC DNA]</scope>
    <source>
        <strain>ATCC 204508 / S288c</strain>
    </source>
</reference>
<reference key="2">
    <citation type="journal article" date="2014" name="G3 (Bethesda)">
        <title>The reference genome sequence of Saccharomyces cerevisiae: Then and now.</title>
        <authorList>
            <person name="Engel S.R."/>
            <person name="Dietrich F.S."/>
            <person name="Fisk D.G."/>
            <person name="Binkley G."/>
            <person name="Balakrishnan R."/>
            <person name="Costanzo M.C."/>
            <person name="Dwight S.S."/>
            <person name="Hitz B.C."/>
            <person name="Karra K."/>
            <person name="Nash R.S."/>
            <person name="Weng S."/>
            <person name="Wong E.D."/>
            <person name="Lloyd P."/>
            <person name="Skrzypek M.S."/>
            <person name="Miyasato S.R."/>
            <person name="Simison M."/>
            <person name="Cherry J.M."/>
        </authorList>
    </citation>
    <scope>GENOME REANNOTATION</scope>
    <source>
        <strain>ATCC 204508 / S288c</strain>
    </source>
</reference>
<reference key="3">
    <citation type="journal article" date="2007" name="Genome Res.">
        <title>Approaching a complete repository of sequence-verified protein-encoding clones for Saccharomyces cerevisiae.</title>
        <authorList>
            <person name="Hu Y."/>
            <person name="Rolfs A."/>
            <person name="Bhullar B."/>
            <person name="Murthy T.V.S."/>
            <person name="Zhu C."/>
            <person name="Berger M.F."/>
            <person name="Camargo A.A."/>
            <person name="Kelley F."/>
            <person name="McCarron S."/>
            <person name="Jepson D."/>
            <person name="Richardson A."/>
            <person name="Raphael J."/>
            <person name="Moreira D."/>
            <person name="Taycher E."/>
            <person name="Zuo D."/>
            <person name="Mohr S."/>
            <person name="Kane M.F."/>
            <person name="Williamson J."/>
            <person name="Simpson A.J.G."/>
            <person name="Bulyk M.L."/>
            <person name="Harlow E."/>
            <person name="Marsischky G."/>
            <person name="Kolodner R.D."/>
            <person name="LaBaer J."/>
        </authorList>
    </citation>
    <scope>NUCLEOTIDE SEQUENCE [GENOMIC DNA]</scope>
    <source>
        <strain>ATCC 204508 / S288c</strain>
    </source>
</reference>
<reference key="4">
    <citation type="journal article" date="2003" name="Curr. Genet.">
        <title>Rsf1p, a protein required for respiratory growth of Saccharomyces cerevisiae.</title>
        <authorList>
            <person name="Lu L."/>
            <person name="Roberts G."/>
            <person name="Simon K."/>
            <person name="Yu J."/>
            <person name="Hudson A.P."/>
        </authorList>
    </citation>
    <scope>INDUCTION</scope>
    <scope>FUNCTION</scope>
    <scope>SUBCELLULAR LOCATION</scope>
</reference>
<reference key="5">
    <citation type="journal article" date="2003" name="Nature">
        <title>Global analysis of protein localization in budding yeast.</title>
        <authorList>
            <person name="Huh W.-K."/>
            <person name="Falvo J.V."/>
            <person name="Gerke L.C."/>
            <person name="Carroll A.S."/>
            <person name="Howson R.W."/>
            <person name="Weissman J.S."/>
            <person name="O'Shea E.K."/>
        </authorList>
    </citation>
    <scope>SUBCELLULAR LOCATION [LARGE SCALE ANALYSIS]</scope>
</reference>
<reference key="6">
    <citation type="journal article" date="2006" name="Nucleic Acids Res.">
        <title>Transcriptional activators in yeast.</title>
        <authorList>
            <person name="Titz B."/>
            <person name="Thomas S."/>
            <person name="Rajagopala S.V."/>
            <person name="Chiba T."/>
            <person name="Ito T."/>
            <person name="Uetz P."/>
        </authorList>
    </citation>
    <scope>FUNCTION</scope>
</reference>
<reference key="7">
    <citation type="journal article" date="2006" name="Proc. Natl. Acad. Sci. U.S.A.">
        <title>Genomic analysis of the hierarchical structure of regulatory networks.</title>
        <authorList>
            <person name="Yu H."/>
            <person name="Gerstein M."/>
        </authorList>
    </citation>
    <scope>FUNCTION</scope>
</reference>
<reference key="8">
    <citation type="journal article" date="2008" name="Mol. Cell. Proteomics">
        <title>A multidimensional chromatography technology for in-depth phosphoproteome analysis.</title>
        <authorList>
            <person name="Albuquerque C.P."/>
            <person name="Smolka M.B."/>
            <person name="Payne S.H."/>
            <person name="Bafna V."/>
            <person name="Eng J."/>
            <person name="Zhou H."/>
        </authorList>
    </citation>
    <scope>IDENTIFICATION BY MASS SPECTROMETRY [LARGE SCALE ANALYSIS]</scope>
</reference>
<reference key="9">
    <citation type="journal article" date="2009" name="Science">
        <title>Global analysis of Cdk1 substrate phosphorylation sites provides insights into evolution.</title>
        <authorList>
            <person name="Holt L.J."/>
            <person name="Tuch B.B."/>
            <person name="Villen J."/>
            <person name="Johnson A.D."/>
            <person name="Gygi S.P."/>
            <person name="Morgan D.O."/>
        </authorList>
    </citation>
    <scope>IDENTIFICATION BY MASS SPECTROMETRY [LARGE SCALE ANALYSIS]</scope>
</reference>